<sequence>MIENWPQKPEGSQWTDDQWKAVVANGRDILVAAAAGSGKTAVLVERIIKKIIREENPVDVDRLLVVTFTNAAAQEMKNRIGEALEKVLIDGPGSQHIRKQLSLLNKASISTIHSFCLQVIRGYYYMLDVDPRFRIANQTENELLKEEVLDDILEEEYGIEDNSIFFELVDRYTSDRSDDDLQRMILALHTESRAHPNPEKWLDKLVEAYDVEGKTIEDLVYASYLLEDVKFQLETAEKHIRKATELAMLPDGPAPRVETLQADLALLGTLSSAARGSWTSVYEAMQNVSWQTLKRIKKSDYNEDVVKRVDSLRNKAKDEVKKLQEELFSRRPESFLRDFQDMHPVLEKLVKLVKVFTERFQAIKRDKGMVDFTDLEHFCLQILSEQSEDGEMKPSAVALQYRNKFAEVLVDEYQDTNFVQESIIKFVTKDFESEGNLFMVGDVKQSIYRFRLAEPGLFLGKYKRFTQEGSGGGMKIDLAKNFRSRHEVLAGTNFIFKQIMGEEVGEIDYDADAELKLGASYPEGEDVAAELLCIQQTEEEVQDGEEGAEVEKAQLEARLMAQRIKAMVDSGYAVYDRKTDSMRPVQYRDFVILLRSMPWAPQIMEELKLQGIPVYADLATGYFEATEVNIMMNVFRVIDNPMQDIPLAAVLRSPIVGLNDEELATLRAHGKKGSFYEVMSSFLKGAPLEEEQELHDKLEWFYKLLQGWREFARQQSLSDLIWKVYGETGYYDFVGGLPAGKQRQANLRVLYDRARQYEATSFRGLFRFLRFIERILERGDDMGTARALGEQEDVVRIMTIHKSKGLEFPVVFVAGLGRRFNTQDLMKRFLLHKDFGFGSQFIDPRKRIKYTTLSQLAIKRKMKMELIAEEMRVLYVALTRAKEKLILIGTVKDANKEMEKWLDAREHSEWLLPDHIRAGASCYLDWIAPSLYRHRDSEMLLELGQGNIPGEIYEYSASWKVEVVEGKDLLAPEPVQEEKQELLEALRDKKAVPLESERKEEVYDRLMWKYGYEDATSHRAKQSVTEIKRNYQSEEGSDNAFIKKLRAPIKTRPRFMEKKGLTYAERGTAVHAVMQHVDLKKPITIEVLQEQIARMVNKELLTFEQAEEIAIEKVISFFDSDLGKRVLAAKSVEREVPFTMMLSAEEAYQDWQGKKGESILVQGVIDCMIEEEDGITLIDFKTDTIEGKFPGGFDQAKPTLEDRYKVQLSLYAKALEKSLKHPVKEKCLYFFDGNHVVNIEE</sequence>
<accession>A9VJ02</accession>
<protein>
    <recommendedName>
        <fullName evidence="1">ATP-dependent helicase/nuclease subunit A</fullName>
        <ecNumber evidence="1">3.1.-.-</ecNumber>
        <ecNumber evidence="1">5.6.2.4</ecNumber>
    </recommendedName>
    <alternativeName>
        <fullName evidence="1">ATP-dependent helicase/nuclease AddA</fullName>
    </alternativeName>
    <alternativeName>
        <fullName evidence="1">DNA 3'-5' helicase AddA</fullName>
    </alternativeName>
</protein>
<keyword id="KW-0067">ATP-binding</keyword>
<keyword id="KW-0227">DNA damage</keyword>
<keyword id="KW-0234">DNA repair</keyword>
<keyword id="KW-0238">DNA-binding</keyword>
<keyword id="KW-0269">Exonuclease</keyword>
<keyword id="KW-0347">Helicase</keyword>
<keyword id="KW-0378">Hydrolase</keyword>
<keyword id="KW-0413">Isomerase</keyword>
<keyword id="KW-0540">Nuclease</keyword>
<keyword id="KW-0547">Nucleotide-binding</keyword>
<proteinExistence type="inferred from homology"/>
<gene>
    <name evidence="1" type="primary">addA</name>
    <name type="ordered locus">BcerKBAB4_1041</name>
</gene>
<reference key="1">
    <citation type="journal article" date="2008" name="Chem. Biol. Interact.">
        <title>Extending the Bacillus cereus group genomics to putative food-borne pathogens of different toxicity.</title>
        <authorList>
            <person name="Lapidus A."/>
            <person name="Goltsman E."/>
            <person name="Auger S."/>
            <person name="Galleron N."/>
            <person name="Segurens B."/>
            <person name="Dossat C."/>
            <person name="Land M.L."/>
            <person name="Broussolle V."/>
            <person name="Brillard J."/>
            <person name="Guinebretiere M.-H."/>
            <person name="Sanchis V."/>
            <person name="Nguen-the C."/>
            <person name="Lereclus D."/>
            <person name="Richardson P."/>
            <person name="Wincker P."/>
            <person name="Weissenbach J."/>
            <person name="Ehrlich S.D."/>
            <person name="Sorokin A."/>
        </authorList>
    </citation>
    <scope>NUCLEOTIDE SEQUENCE [LARGE SCALE GENOMIC DNA]</scope>
    <source>
        <strain>KBAB4</strain>
    </source>
</reference>
<organism>
    <name type="scientific">Bacillus mycoides (strain KBAB4)</name>
    <name type="common">Bacillus weihenstephanensis</name>
    <dbReference type="NCBI Taxonomy" id="315730"/>
    <lineage>
        <taxon>Bacteria</taxon>
        <taxon>Bacillati</taxon>
        <taxon>Bacillota</taxon>
        <taxon>Bacilli</taxon>
        <taxon>Bacillales</taxon>
        <taxon>Bacillaceae</taxon>
        <taxon>Bacillus</taxon>
        <taxon>Bacillus cereus group</taxon>
    </lineage>
</organism>
<feature type="chain" id="PRO_0000379245" description="ATP-dependent helicase/nuclease subunit A">
    <location>
        <begin position="1"/>
        <end position="1241"/>
    </location>
</feature>
<feature type="domain" description="UvrD-like helicase ATP-binding" evidence="1">
    <location>
        <begin position="12"/>
        <end position="485"/>
    </location>
</feature>
<feature type="domain" description="UvrD-like helicase C-terminal" evidence="1">
    <location>
        <begin position="505"/>
        <end position="805"/>
    </location>
</feature>
<feature type="binding site" evidence="1">
    <location>
        <begin position="33"/>
        <end position="40"/>
    </location>
    <ligand>
        <name>ATP</name>
        <dbReference type="ChEBI" id="CHEBI:30616"/>
    </ligand>
</feature>
<evidence type="ECO:0000255" key="1">
    <source>
        <dbReference type="HAMAP-Rule" id="MF_01451"/>
    </source>
</evidence>
<dbReference type="EC" id="3.1.-.-" evidence="1"/>
<dbReference type="EC" id="5.6.2.4" evidence="1"/>
<dbReference type="EMBL" id="CP000903">
    <property type="protein sequence ID" value="ABY42291.1"/>
    <property type="molecule type" value="Genomic_DNA"/>
</dbReference>
<dbReference type="RefSeq" id="WP_012260538.1">
    <property type="nucleotide sequence ID" value="NC_010184.1"/>
</dbReference>
<dbReference type="SMR" id="A9VJ02"/>
<dbReference type="KEGG" id="bwe:BcerKBAB4_1041"/>
<dbReference type="eggNOG" id="COG1074">
    <property type="taxonomic scope" value="Bacteria"/>
</dbReference>
<dbReference type="HOGENOM" id="CLU_001114_3_1_9"/>
<dbReference type="Proteomes" id="UP000002154">
    <property type="component" value="Chromosome"/>
</dbReference>
<dbReference type="GO" id="GO:0005829">
    <property type="term" value="C:cytosol"/>
    <property type="evidence" value="ECO:0007669"/>
    <property type="project" value="TreeGrafter"/>
</dbReference>
<dbReference type="GO" id="GO:0033202">
    <property type="term" value="C:DNA helicase complex"/>
    <property type="evidence" value="ECO:0007669"/>
    <property type="project" value="TreeGrafter"/>
</dbReference>
<dbReference type="GO" id="GO:0043138">
    <property type="term" value="F:3'-5' DNA helicase activity"/>
    <property type="evidence" value="ECO:0007669"/>
    <property type="project" value="UniProtKB-UniRule"/>
</dbReference>
<dbReference type="GO" id="GO:0008408">
    <property type="term" value="F:3'-5' exonuclease activity"/>
    <property type="evidence" value="ECO:0007669"/>
    <property type="project" value="UniProtKB-UniRule"/>
</dbReference>
<dbReference type="GO" id="GO:0005524">
    <property type="term" value="F:ATP binding"/>
    <property type="evidence" value="ECO:0007669"/>
    <property type="project" value="UniProtKB-UniRule"/>
</dbReference>
<dbReference type="GO" id="GO:0016887">
    <property type="term" value="F:ATP hydrolysis activity"/>
    <property type="evidence" value="ECO:0007669"/>
    <property type="project" value="RHEA"/>
</dbReference>
<dbReference type="GO" id="GO:0003690">
    <property type="term" value="F:double-stranded DNA binding"/>
    <property type="evidence" value="ECO:0007669"/>
    <property type="project" value="UniProtKB-UniRule"/>
</dbReference>
<dbReference type="GO" id="GO:0000724">
    <property type="term" value="P:double-strand break repair via homologous recombination"/>
    <property type="evidence" value="ECO:0007669"/>
    <property type="project" value="UniProtKB-UniRule"/>
</dbReference>
<dbReference type="CDD" id="cd18807">
    <property type="entry name" value="SF1_C_UvrD"/>
    <property type="match status" value="1"/>
</dbReference>
<dbReference type="FunFam" id="3.40.50.300:FF:001164">
    <property type="entry name" value="ATP-dependent helicase/nuclease subunit A"/>
    <property type="match status" value="1"/>
</dbReference>
<dbReference type="FunFam" id="3.40.50.300:FF:001187">
    <property type="entry name" value="ATP-dependent helicase/nuclease subunit A"/>
    <property type="match status" value="1"/>
</dbReference>
<dbReference type="FunFam" id="3.40.50.300:FF:001196">
    <property type="entry name" value="ATP-dependent helicase/nuclease subunit A"/>
    <property type="match status" value="1"/>
</dbReference>
<dbReference type="FunFam" id="3.40.50.300:FF:001236">
    <property type="entry name" value="ATP-dependent helicase/nuclease subunit A"/>
    <property type="match status" value="1"/>
</dbReference>
<dbReference type="Gene3D" id="3.90.320.10">
    <property type="match status" value="1"/>
</dbReference>
<dbReference type="Gene3D" id="6.10.250.2380">
    <property type="match status" value="1"/>
</dbReference>
<dbReference type="Gene3D" id="3.40.50.300">
    <property type="entry name" value="P-loop containing nucleotide triphosphate hydrolases"/>
    <property type="match status" value="4"/>
</dbReference>
<dbReference type="HAMAP" id="MF_01451">
    <property type="entry name" value="AddA"/>
    <property type="match status" value="1"/>
</dbReference>
<dbReference type="InterPro" id="IPR014152">
    <property type="entry name" value="AddA"/>
</dbReference>
<dbReference type="InterPro" id="IPR014017">
    <property type="entry name" value="DNA_helicase_UvrD-like_C"/>
</dbReference>
<dbReference type="InterPro" id="IPR000212">
    <property type="entry name" value="DNA_helicase_UvrD/REP"/>
</dbReference>
<dbReference type="InterPro" id="IPR027417">
    <property type="entry name" value="P-loop_NTPase"/>
</dbReference>
<dbReference type="InterPro" id="IPR011604">
    <property type="entry name" value="PDDEXK-like_dom_sf"/>
</dbReference>
<dbReference type="InterPro" id="IPR038726">
    <property type="entry name" value="PDDEXK_AddAB-type"/>
</dbReference>
<dbReference type="InterPro" id="IPR011335">
    <property type="entry name" value="Restrct_endonuc-II-like"/>
</dbReference>
<dbReference type="InterPro" id="IPR014016">
    <property type="entry name" value="UvrD-like_ATP-bd"/>
</dbReference>
<dbReference type="NCBIfam" id="TIGR02785">
    <property type="entry name" value="addA_Gpos"/>
    <property type="match status" value="1"/>
</dbReference>
<dbReference type="PANTHER" id="PTHR11070:SF48">
    <property type="entry name" value="ATP-DEPENDENT HELICASE_NUCLEASE SUBUNIT A"/>
    <property type="match status" value="1"/>
</dbReference>
<dbReference type="PANTHER" id="PTHR11070">
    <property type="entry name" value="UVRD / RECB / PCRA DNA HELICASE FAMILY MEMBER"/>
    <property type="match status" value="1"/>
</dbReference>
<dbReference type="Pfam" id="PF12705">
    <property type="entry name" value="PDDEXK_1"/>
    <property type="match status" value="1"/>
</dbReference>
<dbReference type="Pfam" id="PF00580">
    <property type="entry name" value="UvrD-helicase"/>
    <property type="match status" value="1"/>
</dbReference>
<dbReference type="Pfam" id="PF13361">
    <property type="entry name" value="UvrD_C"/>
    <property type="match status" value="1"/>
</dbReference>
<dbReference type="SUPFAM" id="SSF52540">
    <property type="entry name" value="P-loop containing nucleoside triphosphate hydrolases"/>
    <property type="match status" value="1"/>
</dbReference>
<dbReference type="SUPFAM" id="SSF52980">
    <property type="entry name" value="Restriction endonuclease-like"/>
    <property type="match status" value="1"/>
</dbReference>
<dbReference type="PROSITE" id="PS51198">
    <property type="entry name" value="UVRD_HELICASE_ATP_BIND"/>
    <property type="match status" value="1"/>
</dbReference>
<dbReference type="PROSITE" id="PS51217">
    <property type="entry name" value="UVRD_HELICASE_CTER"/>
    <property type="match status" value="1"/>
</dbReference>
<comment type="function">
    <text evidence="1">The heterodimer acts as both an ATP-dependent DNA helicase and an ATP-dependent, dual-direction single-stranded exonuclease. Recognizes the chi site generating a DNA molecule suitable for the initiation of homologous recombination. The AddA nuclease domain is required for chi fragment generation; this subunit has the helicase and 3' -&gt; 5' nuclease activities.</text>
</comment>
<comment type="catalytic activity">
    <reaction evidence="1">
        <text>Couples ATP hydrolysis with the unwinding of duplex DNA by translocating in the 3'-5' direction.</text>
        <dbReference type="EC" id="5.6.2.4"/>
    </reaction>
</comment>
<comment type="catalytic activity">
    <reaction evidence="1">
        <text>ATP + H2O = ADP + phosphate + H(+)</text>
        <dbReference type="Rhea" id="RHEA:13065"/>
        <dbReference type="ChEBI" id="CHEBI:15377"/>
        <dbReference type="ChEBI" id="CHEBI:15378"/>
        <dbReference type="ChEBI" id="CHEBI:30616"/>
        <dbReference type="ChEBI" id="CHEBI:43474"/>
        <dbReference type="ChEBI" id="CHEBI:456216"/>
        <dbReference type="EC" id="5.6.2.4"/>
    </reaction>
</comment>
<comment type="cofactor">
    <cofactor evidence="1">
        <name>Mg(2+)</name>
        <dbReference type="ChEBI" id="CHEBI:18420"/>
    </cofactor>
</comment>
<comment type="subunit">
    <text evidence="1">Heterodimer of AddA and AddB/RexB.</text>
</comment>
<comment type="similarity">
    <text evidence="1">Belongs to the helicase family. AddA subfamily.</text>
</comment>
<name>ADDA_BACMK</name>